<gene>
    <name evidence="1" type="primary">coaD</name>
    <name type="ordered locus">LSEI_1318</name>
</gene>
<evidence type="ECO:0000255" key="1">
    <source>
        <dbReference type="HAMAP-Rule" id="MF_00151"/>
    </source>
</evidence>
<comment type="function">
    <text evidence="1">Reversibly transfers an adenylyl group from ATP to 4'-phosphopantetheine, yielding dephospho-CoA (dPCoA) and pyrophosphate.</text>
</comment>
<comment type="catalytic activity">
    <reaction evidence="1">
        <text>(R)-4'-phosphopantetheine + ATP + H(+) = 3'-dephospho-CoA + diphosphate</text>
        <dbReference type="Rhea" id="RHEA:19801"/>
        <dbReference type="ChEBI" id="CHEBI:15378"/>
        <dbReference type="ChEBI" id="CHEBI:30616"/>
        <dbReference type="ChEBI" id="CHEBI:33019"/>
        <dbReference type="ChEBI" id="CHEBI:57328"/>
        <dbReference type="ChEBI" id="CHEBI:61723"/>
        <dbReference type="EC" id="2.7.7.3"/>
    </reaction>
</comment>
<comment type="cofactor">
    <cofactor evidence="1">
        <name>Mg(2+)</name>
        <dbReference type="ChEBI" id="CHEBI:18420"/>
    </cofactor>
</comment>
<comment type="pathway">
    <text evidence="1">Cofactor biosynthesis; coenzyme A biosynthesis; CoA from (R)-pantothenate: step 4/5.</text>
</comment>
<comment type="subunit">
    <text evidence="1">Homohexamer.</text>
</comment>
<comment type="subcellular location">
    <subcellularLocation>
        <location evidence="1">Cytoplasm</location>
    </subcellularLocation>
</comment>
<comment type="similarity">
    <text evidence="1">Belongs to the bacterial CoaD family.</text>
</comment>
<dbReference type="EC" id="2.7.7.3" evidence="1"/>
<dbReference type="EMBL" id="CP000423">
    <property type="protein sequence ID" value="ABJ70099.1"/>
    <property type="molecule type" value="Genomic_DNA"/>
</dbReference>
<dbReference type="RefSeq" id="WP_003565253.1">
    <property type="nucleotide sequence ID" value="NC_008526.1"/>
</dbReference>
<dbReference type="RefSeq" id="YP_806541.1">
    <property type="nucleotide sequence ID" value="NC_008526.1"/>
</dbReference>
<dbReference type="SMR" id="Q039M3"/>
<dbReference type="STRING" id="321967.LSEI_1318"/>
<dbReference type="PaxDb" id="321967-LSEI_1318"/>
<dbReference type="GeneID" id="57089994"/>
<dbReference type="KEGG" id="lca:LSEI_1318"/>
<dbReference type="PATRIC" id="fig|321967.11.peg.1297"/>
<dbReference type="HOGENOM" id="CLU_100149_0_1_9"/>
<dbReference type="UniPathway" id="UPA00241">
    <property type="reaction ID" value="UER00355"/>
</dbReference>
<dbReference type="Proteomes" id="UP000001651">
    <property type="component" value="Chromosome"/>
</dbReference>
<dbReference type="GO" id="GO:0005737">
    <property type="term" value="C:cytoplasm"/>
    <property type="evidence" value="ECO:0007669"/>
    <property type="project" value="UniProtKB-SubCell"/>
</dbReference>
<dbReference type="GO" id="GO:0005524">
    <property type="term" value="F:ATP binding"/>
    <property type="evidence" value="ECO:0007669"/>
    <property type="project" value="UniProtKB-KW"/>
</dbReference>
<dbReference type="GO" id="GO:0004595">
    <property type="term" value="F:pantetheine-phosphate adenylyltransferase activity"/>
    <property type="evidence" value="ECO:0007669"/>
    <property type="project" value="UniProtKB-UniRule"/>
</dbReference>
<dbReference type="GO" id="GO:0015937">
    <property type="term" value="P:coenzyme A biosynthetic process"/>
    <property type="evidence" value="ECO:0007669"/>
    <property type="project" value="UniProtKB-UniRule"/>
</dbReference>
<dbReference type="CDD" id="cd02163">
    <property type="entry name" value="PPAT"/>
    <property type="match status" value="1"/>
</dbReference>
<dbReference type="Gene3D" id="3.40.50.620">
    <property type="entry name" value="HUPs"/>
    <property type="match status" value="1"/>
</dbReference>
<dbReference type="HAMAP" id="MF_00151">
    <property type="entry name" value="PPAT_bact"/>
    <property type="match status" value="1"/>
</dbReference>
<dbReference type="InterPro" id="IPR004821">
    <property type="entry name" value="Cyt_trans-like"/>
</dbReference>
<dbReference type="InterPro" id="IPR001980">
    <property type="entry name" value="PPAT"/>
</dbReference>
<dbReference type="InterPro" id="IPR014729">
    <property type="entry name" value="Rossmann-like_a/b/a_fold"/>
</dbReference>
<dbReference type="NCBIfam" id="TIGR01510">
    <property type="entry name" value="coaD_prev_kdtB"/>
    <property type="match status" value="1"/>
</dbReference>
<dbReference type="NCBIfam" id="TIGR00125">
    <property type="entry name" value="cyt_tran_rel"/>
    <property type="match status" value="1"/>
</dbReference>
<dbReference type="PANTHER" id="PTHR21342">
    <property type="entry name" value="PHOSPHOPANTETHEINE ADENYLYLTRANSFERASE"/>
    <property type="match status" value="1"/>
</dbReference>
<dbReference type="PANTHER" id="PTHR21342:SF1">
    <property type="entry name" value="PHOSPHOPANTETHEINE ADENYLYLTRANSFERASE"/>
    <property type="match status" value="1"/>
</dbReference>
<dbReference type="Pfam" id="PF01467">
    <property type="entry name" value="CTP_transf_like"/>
    <property type="match status" value="1"/>
</dbReference>
<dbReference type="PRINTS" id="PR01020">
    <property type="entry name" value="LPSBIOSNTHSS"/>
</dbReference>
<dbReference type="SUPFAM" id="SSF52374">
    <property type="entry name" value="Nucleotidylyl transferase"/>
    <property type="match status" value="1"/>
</dbReference>
<accession>Q039M3</accession>
<protein>
    <recommendedName>
        <fullName evidence="1">Phosphopantetheine adenylyltransferase</fullName>
        <ecNumber evidence="1">2.7.7.3</ecNumber>
    </recommendedName>
    <alternativeName>
        <fullName evidence="1">Dephospho-CoA pyrophosphorylase</fullName>
    </alternativeName>
    <alternativeName>
        <fullName evidence="1">Pantetheine-phosphate adenylyltransferase</fullName>
        <shortName evidence="1">PPAT</shortName>
    </alternativeName>
</protein>
<sequence>MTKKIAVFPGSFDPFTNGHLDTVKRASRLFDEVVVAAMTNTSKKPLFSSEEKLALISESTAGLPNVKAMAAPKRLTVEFARSIGAQFMIRGIRNVADFGYEADIATVNHDLDPEIETVFLLADKQYDALSSTIIKEVAAFGGDVHRFVPAPVEAALYAKLGDAHQTK</sequence>
<name>COAD_LACP3</name>
<keyword id="KW-0067">ATP-binding</keyword>
<keyword id="KW-0173">Coenzyme A biosynthesis</keyword>
<keyword id="KW-0963">Cytoplasm</keyword>
<keyword id="KW-0460">Magnesium</keyword>
<keyword id="KW-0547">Nucleotide-binding</keyword>
<keyword id="KW-0548">Nucleotidyltransferase</keyword>
<keyword id="KW-1185">Reference proteome</keyword>
<keyword id="KW-0808">Transferase</keyword>
<feature type="chain" id="PRO_1000058164" description="Phosphopantetheine adenylyltransferase">
    <location>
        <begin position="1"/>
        <end position="167"/>
    </location>
</feature>
<feature type="binding site" evidence="1">
    <location>
        <begin position="11"/>
        <end position="12"/>
    </location>
    <ligand>
        <name>ATP</name>
        <dbReference type="ChEBI" id="CHEBI:30616"/>
    </ligand>
</feature>
<feature type="binding site" evidence="1">
    <location>
        <position position="11"/>
    </location>
    <ligand>
        <name>substrate</name>
    </ligand>
</feature>
<feature type="binding site" evidence="1">
    <location>
        <position position="19"/>
    </location>
    <ligand>
        <name>ATP</name>
        <dbReference type="ChEBI" id="CHEBI:30616"/>
    </ligand>
</feature>
<feature type="binding site" evidence="1">
    <location>
        <position position="43"/>
    </location>
    <ligand>
        <name>substrate</name>
    </ligand>
</feature>
<feature type="binding site" evidence="1">
    <location>
        <position position="76"/>
    </location>
    <ligand>
        <name>substrate</name>
    </ligand>
</feature>
<feature type="binding site" evidence="1">
    <location>
        <position position="90"/>
    </location>
    <ligand>
        <name>substrate</name>
    </ligand>
</feature>
<feature type="binding site" evidence="1">
    <location>
        <begin position="91"/>
        <end position="93"/>
    </location>
    <ligand>
        <name>ATP</name>
        <dbReference type="ChEBI" id="CHEBI:30616"/>
    </ligand>
</feature>
<feature type="binding site" evidence="1">
    <location>
        <position position="101"/>
    </location>
    <ligand>
        <name>ATP</name>
        <dbReference type="ChEBI" id="CHEBI:30616"/>
    </ligand>
</feature>
<feature type="binding site" evidence="1">
    <location>
        <begin position="126"/>
        <end position="132"/>
    </location>
    <ligand>
        <name>ATP</name>
        <dbReference type="ChEBI" id="CHEBI:30616"/>
    </ligand>
</feature>
<feature type="site" description="Transition state stabilizer" evidence="1">
    <location>
        <position position="19"/>
    </location>
</feature>
<organism>
    <name type="scientific">Lacticaseibacillus paracasei (strain ATCC 334 / BCRC 17002 / CCUG 31169 / CIP 107868 / KCTC 3260 / NRRL B-441)</name>
    <name type="common">Lactobacillus paracasei</name>
    <dbReference type="NCBI Taxonomy" id="321967"/>
    <lineage>
        <taxon>Bacteria</taxon>
        <taxon>Bacillati</taxon>
        <taxon>Bacillota</taxon>
        <taxon>Bacilli</taxon>
        <taxon>Lactobacillales</taxon>
        <taxon>Lactobacillaceae</taxon>
        <taxon>Lacticaseibacillus</taxon>
    </lineage>
</organism>
<reference key="1">
    <citation type="journal article" date="2006" name="Proc. Natl. Acad. Sci. U.S.A.">
        <title>Comparative genomics of the lactic acid bacteria.</title>
        <authorList>
            <person name="Makarova K.S."/>
            <person name="Slesarev A."/>
            <person name="Wolf Y.I."/>
            <person name="Sorokin A."/>
            <person name="Mirkin B."/>
            <person name="Koonin E.V."/>
            <person name="Pavlov A."/>
            <person name="Pavlova N."/>
            <person name="Karamychev V."/>
            <person name="Polouchine N."/>
            <person name="Shakhova V."/>
            <person name="Grigoriev I."/>
            <person name="Lou Y."/>
            <person name="Rohksar D."/>
            <person name="Lucas S."/>
            <person name="Huang K."/>
            <person name="Goodstein D.M."/>
            <person name="Hawkins T."/>
            <person name="Plengvidhya V."/>
            <person name="Welker D."/>
            <person name="Hughes J."/>
            <person name="Goh Y."/>
            <person name="Benson A."/>
            <person name="Baldwin K."/>
            <person name="Lee J.-H."/>
            <person name="Diaz-Muniz I."/>
            <person name="Dosti B."/>
            <person name="Smeianov V."/>
            <person name="Wechter W."/>
            <person name="Barabote R."/>
            <person name="Lorca G."/>
            <person name="Altermann E."/>
            <person name="Barrangou R."/>
            <person name="Ganesan B."/>
            <person name="Xie Y."/>
            <person name="Rawsthorne H."/>
            <person name="Tamir D."/>
            <person name="Parker C."/>
            <person name="Breidt F."/>
            <person name="Broadbent J.R."/>
            <person name="Hutkins R."/>
            <person name="O'Sullivan D."/>
            <person name="Steele J."/>
            <person name="Unlu G."/>
            <person name="Saier M.H. Jr."/>
            <person name="Klaenhammer T."/>
            <person name="Richardson P."/>
            <person name="Kozyavkin S."/>
            <person name="Weimer B.C."/>
            <person name="Mills D.A."/>
        </authorList>
    </citation>
    <scope>NUCLEOTIDE SEQUENCE [LARGE SCALE GENOMIC DNA]</scope>
    <source>
        <strain>ATCC 334 / BCRC 17002 / CCUG 31169 / CIP 107868 / KCTC 3260 / NRRL B-441</strain>
    </source>
</reference>
<proteinExistence type="inferred from homology"/>